<keyword id="KW-0143">Chaperone</keyword>
<keyword id="KW-0156">Chromatin regulator</keyword>
<keyword id="KW-0539">Nucleus</keyword>
<keyword id="KW-1185">Reference proteome</keyword>
<keyword id="KW-0804">Transcription</keyword>
<keyword id="KW-0805">Transcription regulation</keyword>
<sequence>MSHIRLTQVLIHNNPSSFNSPFIFDISFECVSPIKEDLEWKVIYVGSADNEKNDQVLDSILLGPVAVGQNQFVFEVDPPDANKIPKDDLLGVTVVFLICAYKGEDFIRVGYYVNNDYFEQELKDNPPETPDLSKIQRNVMDDKPVVTGFPIQWN</sequence>
<comment type="function">
    <text evidence="1">Histone chaperone that facilitates histone deposition and histone exchange and removal during nucleosome assembly and disassembly. Cooperates with chromatin assembly factor 1 (CAF-1) to promote replication-dependent chromatin assembly (By similarity).</text>
</comment>
<comment type="subcellular location">
    <subcellularLocation>
        <location evidence="1">Nucleus</location>
    </subcellularLocation>
</comment>
<comment type="similarity">
    <text evidence="2">Belongs to the ASF1 family.</text>
</comment>
<dbReference type="EMBL" id="AAFI02000079">
    <property type="protein sequence ID" value="EAL64594.1"/>
    <property type="molecule type" value="Genomic_DNA"/>
</dbReference>
<dbReference type="RefSeq" id="XP_638098.1">
    <property type="nucleotide sequence ID" value="XM_633006.1"/>
</dbReference>
<dbReference type="SMR" id="Q54N45"/>
<dbReference type="FunCoup" id="Q54N45">
    <property type="interactions" value="974"/>
</dbReference>
<dbReference type="STRING" id="44689.Q54N45"/>
<dbReference type="PaxDb" id="44689-DDB0266681"/>
<dbReference type="EnsemblProtists" id="EAL64594">
    <property type="protein sequence ID" value="EAL64594"/>
    <property type="gene ID" value="DDB_G0285513"/>
</dbReference>
<dbReference type="GeneID" id="8625146"/>
<dbReference type="KEGG" id="ddi:DDB_G0285513"/>
<dbReference type="dictyBase" id="DDB_G0285513">
    <property type="gene designation" value="asf1"/>
</dbReference>
<dbReference type="VEuPathDB" id="AmoebaDB:DDB_G0285513"/>
<dbReference type="eggNOG" id="KOG3265">
    <property type="taxonomic scope" value="Eukaryota"/>
</dbReference>
<dbReference type="HOGENOM" id="CLU_060354_1_1_1"/>
<dbReference type="InParanoid" id="Q54N45"/>
<dbReference type="OMA" id="DYADQEM"/>
<dbReference type="PhylomeDB" id="Q54N45"/>
<dbReference type="PRO" id="PR:Q54N45"/>
<dbReference type="Proteomes" id="UP000002195">
    <property type="component" value="Chromosome 4"/>
</dbReference>
<dbReference type="GO" id="GO:0000785">
    <property type="term" value="C:chromatin"/>
    <property type="evidence" value="ECO:0000318"/>
    <property type="project" value="GO_Central"/>
</dbReference>
<dbReference type="GO" id="GO:0005634">
    <property type="term" value="C:nucleus"/>
    <property type="evidence" value="ECO:0000318"/>
    <property type="project" value="GO_Central"/>
</dbReference>
<dbReference type="GO" id="GO:0042393">
    <property type="term" value="F:histone binding"/>
    <property type="evidence" value="ECO:0000318"/>
    <property type="project" value="GO_Central"/>
</dbReference>
<dbReference type="GO" id="GO:0006335">
    <property type="term" value="P:DNA replication-dependent chromatin assembly"/>
    <property type="evidence" value="ECO:0000318"/>
    <property type="project" value="GO_Central"/>
</dbReference>
<dbReference type="GO" id="GO:0006334">
    <property type="term" value="P:nucleosome assembly"/>
    <property type="evidence" value="ECO:0000250"/>
    <property type="project" value="dictyBase"/>
</dbReference>
<dbReference type="FunFam" id="2.60.40.1490:FF:000001">
    <property type="entry name" value="Histone chaperone ASF1"/>
    <property type="match status" value="1"/>
</dbReference>
<dbReference type="Gene3D" id="2.60.40.1490">
    <property type="entry name" value="Histone chaperone ASF1-like"/>
    <property type="match status" value="1"/>
</dbReference>
<dbReference type="InterPro" id="IPR006818">
    <property type="entry name" value="ASF1-like"/>
</dbReference>
<dbReference type="InterPro" id="IPR036747">
    <property type="entry name" value="ASF1-like_sf"/>
</dbReference>
<dbReference type="PANTHER" id="PTHR12040">
    <property type="entry name" value="ANTI-SILENCING PROTEIN 1"/>
    <property type="match status" value="1"/>
</dbReference>
<dbReference type="PANTHER" id="PTHR12040:SF0">
    <property type="entry name" value="HISTONE CHAPERONE ASF1"/>
    <property type="match status" value="1"/>
</dbReference>
<dbReference type="Pfam" id="PF04729">
    <property type="entry name" value="ASF1_hist_chap"/>
    <property type="match status" value="1"/>
</dbReference>
<dbReference type="SUPFAM" id="SSF101546">
    <property type="entry name" value="ASF1-like"/>
    <property type="match status" value="1"/>
</dbReference>
<accession>Q54N45</accession>
<protein>
    <recommendedName>
        <fullName>Histone chaperone asf1</fullName>
    </recommendedName>
    <alternativeName>
        <fullName>Anti-silencing function protein 1 homolog</fullName>
    </alternativeName>
</protein>
<organism>
    <name type="scientific">Dictyostelium discoideum</name>
    <name type="common">Social amoeba</name>
    <dbReference type="NCBI Taxonomy" id="44689"/>
    <lineage>
        <taxon>Eukaryota</taxon>
        <taxon>Amoebozoa</taxon>
        <taxon>Evosea</taxon>
        <taxon>Eumycetozoa</taxon>
        <taxon>Dictyostelia</taxon>
        <taxon>Dictyosteliales</taxon>
        <taxon>Dictyosteliaceae</taxon>
        <taxon>Dictyostelium</taxon>
    </lineage>
</organism>
<feature type="chain" id="PRO_0000331361" description="Histone chaperone asf1">
    <location>
        <begin position="1"/>
        <end position="154"/>
    </location>
</feature>
<reference key="1">
    <citation type="journal article" date="2005" name="Nature">
        <title>The genome of the social amoeba Dictyostelium discoideum.</title>
        <authorList>
            <person name="Eichinger L."/>
            <person name="Pachebat J.A."/>
            <person name="Gloeckner G."/>
            <person name="Rajandream M.A."/>
            <person name="Sucgang R."/>
            <person name="Berriman M."/>
            <person name="Song J."/>
            <person name="Olsen R."/>
            <person name="Szafranski K."/>
            <person name="Xu Q."/>
            <person name="Tunggal B."/>
            <person name="Kummerfeld S."/>
            <person name="Madera M."/>
            <person name="Konfortov B.A."/>
            <person name="Rivero F."/>
            <person name="Bankier A.T."/>
            <person name="Lehmann R."/>
            <person name="Hamlin N."/>
            <person name="Davies R."/>
            <person name="Gaudet P."/>
            <person name="Fey P."/>
            <person name="Pilcher K."/>
            <person name="Chen G."/>
            <person name="Saunders D."/>
            <person name="Sodergren E.J."/>
            <person name="Davis P."/>
            <person name="Kerhornou A."/>
            <person name="Nie X."/>
            <person name="Hall N."/>
            <person name="Anjard C."/>
            <person name="Hemphill L."/>
            <person name="Bason N."/>
            <person name="Farbrother P."/>
            <person name="Desany B."/>
            <person name="Just E."/>
            <person name="Morio T."/>
            <person name="Rost R."/>
            <person name="Churcher C.M."/>
            <person name="Cooper J."/>
            <person name="Haydock S."/>
            <person name="van Driessche N."/>
            <person name="Cronin A."/>
            <person name="Goodhead I."/>
            <person name="Muzny D.M."/>
            <person name="Mourier T."/>
            <person name="Pain A."/>
            <person name="Lu M."/>
            <person name="Harper D."/>
            <person name="Lindsay R."/>
            <person name="Hauser H."/>
            <person name="James K.D."/>
            <person name="Quiles M."/>
            <person name="Madan Babu M."/>
            <person name="Saito T."/>
            <person name="Buchrieser C."/>
            <person name="Wardroper A."/>
            <person name="Felder M."/>
            <person name="Thangavelu M."/>
            <person name="Johnson D."/>
            <person name="Knights A."/>
            <person name="Loulseged H."/>
            <person name="Mungall K.L."/>
            <person name="Oliver K."/>
            <person name="Price C."/>
            <person name="Quail M.A."/>
            <person name="Urushihara H."/>
            <person name="Hernandez J."/>
            <person name="Rabbinowitsch E."/>
            <person name="Steffen D."/>
            <person name="Sanders M."/>
            <person name="Ma J."/>
            <person name="Kohara Y."/>
            <person name="Sharp S."/>
            <person name="Simmonds M.N."/>
            <person name="Spiegler S."/>
            <person name="Tivey A."/>
            <person name="Sugano S."/>
            <person name="White B."/>
            <person name="Walker D."/>
            <person name="Woodward J.R."/>
            <person name="Winckler T."/>
            <person name="Tanaka Y."/>
            <person name="Shaulsky G."/>
            <person name="Schleicher M."/>
            <person name="Weinstock G.M."/>
            <person name="Rosenthal A."/>
            <person name="Cox E.C."/>
            <person name="Chisholm R.L."/>
            <person name="Gibbs R.A."/>
            <person name="Loomis W.F."/>
            <person name="Platzer M."/>
            <person name="Kay R.R."/>
            <person name="Williams J.G."/>
            <person name="Dear P.H."/>
            <person name="Noegel A.A."/>
            <person name="Barrell B.G."/>
            <person name="Kuspa A."/>
        </authorList>
    </citation>
    <scope>NUCLEOTIDE SEQUENCE [LARGE SCALE GENOMIC DNA]</scope>
    <source>
        <strain>AX4</strain>
    </source>
</reference>
<gene>
    <name type="primary">asf1</name>
    <name type="ORF">DDB_G0285513</name>
</gene>
<evidence type="ECO:0000250" key="1"/>
<evidence type="ECO:0000305" key="2"/>
<proteinExistence type="inferred from homology"/>
<name>ASF1_DICDI</name>